<protein>
    <recommendedName>
        <fullName>Transcriptional activator TAF-1</fullName>
    </recommendedName>
</protein>
<keyword id="KW-0010">Activator</keyword>
<keyword id="KW-0238">DNA-binding</keyword>
<keyword id="KW-0539">Nucleus</keyword>
<keyword id="KW-1185">Reference proteome</keyword>
<keyword id="KW-0804">Transcription</keyword>
<keyword id="KW-0805">Transcription regulation</keyword>
<dbReference type="EMBL" id="X60363">
    <property type="protein sequence ID" value="CAA42915.1"/>
    <property type="status" value="ALT_INIT"/>
    <property type="molecule type" value="mRNA"/>
</dbReference>
<dbReference type="PIR" id="S16346">
    <property type="entry name" value="S16346"/>
</dbReference>
<dbReference type="SMR" id="Q99142"/>
<dbReference type="STRING" id="4097.Q99142"/>
<dbReference type="PaxDb" id="4097-Q99142"/>
<dbReference type="Proteomes" id="UP000084051">
    <property type="component" value="Unplaced"/>
</dbReference>
<dbReference type="GO" id="GO:0005634">
    <property type="term" value="C:nucleus"/>
    <property type="evidence" value="ECO:0000318"/>
    <property type="project" value="GO_Central"/>
</dbReference>
<dbReference type="GO" id="GO:0003700">
    <property type="term" value="F:DNA-binding transcription factor activity"/>
    <property type="evidence" value="ECO:0007669"/>
    <property type="project" value="InterPro"/>
</dbReference>
<dbReference type="GO" id="GO:0043565">
    <property type="term" value="F:sequence-specific DNA binding"/>
    <property type="evidence" value="ECO:0000318"/>
    <property type="project" value="GO_Central"/>
</dbReference>
<dbReference type="GO" id="GO:0006355">
    <property type="term" value="P:regulation of DNA-templated transcription"/>
    <property type="evidence" value="ECO:0000318"/>
    <property type="project" value="GO_Central"/>
</dbReference>
<dbReference type="CDD" id="cd14702">
    <property type="entry name" value="bZIP_plant_GBF1"/>
    <property type="match status" value="1"/>
</dbReference>
<dbReference type="Gene3D" id="1.20.5.170">
    <property type="match status" value="1"/>
</dbReference>
<dbReference type="InterPro" id="IPR004827">
    <property type="entry name" value="bZIP"/>
</dbReference>
<dbReference type="InterPro" id="IPR045314">
    <property type="entry name" value="bZIP_plant_GBF1"/>
</dbReference>
<dbReference type="InterPro" id="IPR046347">
    <property type="entry name" value="bZIP_sf"/>
</dbReference>
<dbReference type="InterPro" id="IPR044827">
    <property type="entry name" value="GBF-like"/>
</dbReference>
<dbReference type="PANTHER" id="PTHR45967:SF1">
    <property type="entry name" value="G-BOX-BINDING FACTOR 3"/>
    <property type="match status" value="1"/>
</dbReference>
<dbReference type="PANTHER" id="PTHR45967">
    <property type="entry name" value="G-BOX-BINDING FACTOR 3-RELATED"/>
    <property type="match status" value="1"/>
</dbReference>
<dbReference type="Pfam" id="PF00170">
    <property type="entry name" value="bZIP_1"/>
    <property type="match status" value="1"/>
</dbReference>
<dbReference type="Pfam" id="PF16596">
    <property type="entry name" value="MFMR_assoc"/>
    <property type="match status" value="1"/>
</dbReference>
<dbReference type="SMART" id="SM00338">
    <property type="entry name" value="BRLZ"/>
    <property type="match status" value="1"/>
</dbReference>
<dbReference type="SUPFAM" id="SSF57959">
    <property type="entry name" value="Leucine zipper domain"/>
    <property type="match status" value="1"/>
</dbReference>
<dbReference type="PROSITE" id="PS50217">
    <property type="entry name" value="BZIP"/>
    <property type="match status" value="1"/>
</dbReference>
<dbReference type="PROSITE" id="PS00036">
    <property type="entry name" value="BZIP_BASIC"/>
    <property type="match status" value="1"/>
</dbReference>
<gene>
    <name type="primary">TAF1</name>
</gene>
<evidence type="ECO:0000255" key="1">
    <source>
        <dbReference type="PROSITE-ProRule" id="PRU00978"/>
    </source>
</evidence>
<evidence type="ECO:0000256" key="2">
    <source>
        <dbReference type="SAM" id="MobiDB-lite"/>
    </source>
</evidence>
<evidence type="ECO:0000305" key="3"/>
<sequence>AHGGVYAHPGVPIGSHPPGHGMATSPAVSQAMDGASLSLDASAKSSENSDRGLLAMSLGNGSADNIEGGADHGNSQSGDTEDSTDGSDTNGAGVSERSKKRSRETTPDNSGDSKSHLRRCQPTGEINDDSEKAIVAVRPGKVGEKVMGTVLSPSMTTTLEMRNPASTHLKASPTNVSQLSPALPNEAWLQNERELKREKRKQSNRESARRSRLRKQAEAEELAIRVQSLTAENMTLKSEINKLMENSEKLKLENAALMERLKMNS</sequence>
<comment type="function">
    <text>Trans-activator of a beta-glucuronidase (GUS) reporter gene. Binds to a G-box-related element, (5'-GCAACGTGGC-3'). Also binds to the HEX-motif of wheat histone H3 promoter.</text>
</comment>
<comment type="subcellular location">
    <subcellularLocation>
        <location>Nucleus</location>
    </subcellularLocation>
</comment>
<comment type="tissue specificity">
    <text>Present mainly in roots. Barely detectable in stems and leaves.</text>
</comment>
<comment type="similarity">
    <text evidence="3">Belongs to the bZIP family.</text>
</comment>
<comment type="sequence caution" evidence="3">
    <conflict type="erroneous initiation">
        <sequence resource="EMBL-CDS" id="CAA42915"/>
    </conflict>
</comment>
<reference key="1">
    <citation type="journal article" date="1991" name="EMBO J.">
        <title>A tobacco bZip transcription activator (TAF-1) binds to a G-box-like motif conserved in plant genes.</title>
        <authorList>
            <person name="Oeda K."/>
            <person name="Salinas J."/>
            <person name="Chua N.-H."/>
        </authorList>
    </citation>
    <scope>NUCLEOTIDE SEQUENCE [MRNA]</scope>
    <source>
        <strain>cv. SR1</strain>
        <tissue>Leaf</tissue>
    </source>
</reference>
<feature type="chain" id="PRO_0000076549" description="Transcriptional activator TAF-1">
    <location>
        <begin position="1" status="less than"/>
        <end position="265"/>
    </location>
</feature>
<feature type="domain" description="bZIP" evidence="1">
    <location>
        <begin position="194"/>
        <end position="257"/>
    </location>
</feature>
<feature type="region of interest" description="Disordered" evidence="2">
    <location>
        <begin position="1"/>
        <end position="133"/>
    </location>
</feature>
<feature type="region of interest" description="Disordered" evidence="2">
    <location>
        <begin position="167"/>
        <end position="218"/>
    </location>
</feature>
<feature type="region of interest" description="Basic motif" evidence="1">
    <location>
        <begin position="196"/>
        <end position="215"/>
    </location>
</feature>
<feature type="region of interest" description="Leucine-zipper" evidence="1">
    <location>
        <begin position="222"/>
        <end position="257"/>
    </location>
</feature>
<feature type="compositionally biased region" description="Low complexity" evidence="2">
    <location>
        <begin position="35"/>
        <end position="46"/>
    </location>
</feature>
<feature type="compositionally biased region" description="Basic and acidic residues" evidence="2">
    <location>
        <begin position="103"/>
        <end position="115"/>
    </location>
</feature>
<feature type="compositionally biased region" description="Basic and acidic residues" evidence="2">
    <location>
        <begin position="191"/>
        <end position="209"/>
    </location>
</feature>
<feature type="non-terminal residue">
    <location>
        <position position="1"/>
    </location>
</feature>
<name>TAF1_TOBAC</name>
<accession>Q99142</accession>
<proteinExistence type="evidence at transcript level"/>
<organism>
    <name type="scientific">Nicotiana tabacum</name>
    <name type="common">Common tobacco</name>
    <dbReference type="NCBI Taxonomy" id="4097"/>
    <lineage>
        <taxon>Eukaryota</taxon>
        <taxon>Viridiplantae</taxon>
        <taxon>Streptophyta</taxon>
        <taxon>Embryophyta</taxon>
        <taxon>Tracheophyta</taxon>
        <taxon>Spermatophyta</taxon>
        <taxon>Magnoliopsida</taxon>
        <taxon>eudicotyledons</taxon>
        <taxon>Gunneridae</taxon>
        <taxon>Pentapetalae</taxon>
        <taxon>asterids</taxon>
        <taxon>lamiids</taxon>
        <taxon>Solanales</taxon>
        <taxon>Solanaceae</taxon>
        <taxon>Nicotianoideae</taxon>
        <taxon>Nicotianeae</taxon>
        <taxon>Nicotiana</taxon>
    </lineage>
</organism>